<reference key="1">
    <citation type="journal article" date="1990" name="Nature">
        <title>Cloning of the T gene required in mesoderm formation in the mouse.</title>
        <authorList>
            <person name="Herrmann B.G."/>
            <person name="Labeit S."/>
            <person name="Poustka A."/>
            <person name="King T.R."/>
            <person name="Lehrach H."/>
        </authorList>
    </citation>
    <scope>NUCLEOTIDE SEQUENCE [MRNA]</scope>
</reference>
<reference key="2">
    <citation type="journal article" date="1993" name="EMBO J.">
        <title>The Brachyury gene encodes a novel DNA binding protein.</title>
        <authorList>
            <person name="Kispert A."/>
            <person name="Herrmann B.G."/>
        </authorList>
    </citation>
    <scope>DNA-BINDING</scope>
    <scope>SUBUNIT</scope>
</reference>
<reference key="3">
    <citation type="journal article" date="1995" name="EMBO J.">
        <title>The T protein encoded by Brachyury is a tissue-specific transcription factor.</title>
        <authorList>
            <person name="Kispert A."/>
            <person name="Koschorz B."/>
            <person name="Herrmann B.G."/>
        </authorList>
    </citation>
    <scope>FUNCTION</scope>
    <scope>DNA-BINDING</scope>
    <scope>SUBCELLULAR LOCATION</scope>
</reference>
<protein>
    <recommendedName>
        <fullName evidence="6">T-box transcription factor T</fullName>
    </recommendedName>
    <alternativeName>
        <fullName evidence="6">Brachyury protein</fullName>
    </alternativeName>
    <alternativeName>
        <fullName>Protein T</fullName>
    </alternativeName>
</protein>
<gene>
    <name evidence="1" type="primary">Tbxt</name>
    <name evidence="5" type="synonym">T</name>
</gene>
<comment type="function">
    <text evidence="3 4">Involved in the transcriptional regulation of genes required for mesoderm formation and differentiation (PubMed:7588606). Binds to a palindromic T site 5'-TTCACACCTAGGTGTGAA-3' DNA sequence and activates gene transcription when bound to such a site (PubMed:7588606, PubMed:8344258).</text>
</comment>
<comment type="subunit">
    <text evidence="4">Monomer. Binds DNA as a monomer.</text>
</comment>
<comment type="interaction">
    <interactant intactId="EBI-13637160">
        <id>P20293</id>
    </interactant>
    <interactant intactId="EBI-13637214">
        <id>Q9WUI0</id>
        <label>Mixl1</label>
    </interactant>
    <organismsDiffer>false</organismsDiffer>
    <experiments>7</experiments>
</comment>
<comment type="subcellular location">
    <subcellularLocation>
        <location evidence="3">Nucleus</location>
    </subcellularLocation>
</comment>
<comment type="developmental stage">
    <text>During gastrula and neurula stages in involuting mesoderm and in the notochord.</text>
</comment>
<comment type="disease">
    <text>Embryo lacking the T gene fail to form the notochord, the entire posterior region and the allantois, and die at about 10 days of gestation.</text>
</comment>
<organism>
    <name type="scientific">Mus musculus</name>
    <name type="common">Mouse</name>
    <dbReference type="NCBI Taxonomy" id="10090"/>
    <lineage>
        <taxon>Eukaryota</taxon>
        <taxon>Metazoa</taxon>
        <taxon>Chordata</taxon>
        <taxon>Craniata</taxon>
        <taxon>Vertebrata</taxon>
        <taxon>Euteleostomi</taxon>
        <taxon>Mammalia</taxon>
        <taxon>Eutheria</taxon>
        <taxon>Euarchontoglires</taxon>
        <taxon>Glires</taxon>
        <taxon>Rodentia</taxon>
        <taxon>Myomorpha</taxon>
        <taxon>Muroidea</taxon>
        <taxon>Muridae</taxon>
        <taxon>Murinae</taxon>
        <taxon>Mus</taxon>
        <taxon>Mus</taxon>
    </lineage>
</organism>
<keyword id="KW-0010">Activator</keyword>
<keyword id="KW-0217">Developmental protein</keyword>
<keyword id="KW-0238">DNA-binding</keyword>
<keyword id="KW-0539">Nucleus</keyword>
<keyword id="KW-1185">Reference proteome</keyword>
<keyword id="KW-0804">Transcription</keyword>
<keyword id="KW-0805">Transcription regulation</keyword>
<feature type="chain" id="PRO_0000184415" description="T-box transcription factor T">
    <location>
        <begin position="1"/>
        <end position="436"/>
    </location>
</feature>
<feature type="DNA-binding region" description="T-box" evidence="2">
    <location>
        <begin position="51"/>
        <end position="219"/>
    </location>
</feature>
<dbReference type="EMBL" id="X51683">
    <property type="protein sequence ID" value="CAA35985.1"/>
    <property type="molecule type" value="mRNA"/>
</dbReference>
<dbReference type="CCDS" id="CCDS28383.1"/>
<dbReference type="PIR" id="S08156">
    <property type="entry name" value="S08156"/>
</dbReference>
<dbReference type="RefSeq" id="NP_033335.1">
    <property type="nucleotide sequence ID" value="NM_009309.2"/>
</dbReference>
<dbReference type="RefSeq" id="XP_011244504.1">
    <property type="nucleotide sequence ID" value="XM_011246202.1"/>
</dbReference>
<dbReference type="SMR" id="P20293"/>
<dbReference type="DIP" id="DIP-61216N"/>
<dbReference type="FunCoup" id="P20293">
    <property type="interactions" value="1661"/>
</dbReference>
<dbReference type="IntAct" id="P20293">
    <property type="interactions" value="3"/>
</dbReference>
<dbReference type="STRING" id="10090.ENSMUSP00000074236"/>
<dbReference type="GlyGen" id="P20293">
    <property type="glycosylation" value="1 site"/>
</dbReference>
<dbReference type="PhosphoSitePlus" id="P20293"/>
<dbReference type="PaxDb" id="10090-ENSMUSP00000074236"/>
<dbReference type="ProteomicsDB" id="265377"/>
<dbReference type="Antibodypedia" id="925">
    <property type="antibodies" value="496 antibodies from 35 providers"/>
</dbReference>
<dbReference type="DNASU" id="20997"/>
<dbReference type="Ensembl" id="ENSMUST00000074667.9">
    <property type="protein sequence ID" value="ENSMUSP00000074236.3"/>
    <property type="gene ID" value="ENSMUSG00000062327.11"/>
</dbReference>
<dbReference type="GeneID" id="20997"/>
<dbReference type="KEGG" id="mmu:20997"/>
<dbReference type="UCSC" id="uc008ajq.1">
    <property type="organism name" value="mouse"/>
</dbReference>
<dbReference type="AGR" id="MGI:98472"/>
<dbReference type="CTD" id="20997"/>
<dbReference type="MGI" id="MGI:98472">
    <property type="gene designation" value="T"/>
</dbReference>
<dbReference type="VEuPathDB" id="HostDB:ENSMUSG00000062327"/>
<dbReference type="eggNOG" id="KOG3585">
    <property type="taxonomic scope" value="Eukaryota"/>
</dbReference>
<dbReference type="GeneTree" id="ENSGT00940000157912"/>
<dbReference type="HOGENOM" id="CLU_038303_1_1_1"/>
<dbReference type="InParanoid" id="P20293"/>
<dbReference type="OMA" id="TGAGECP"/>
<dbReference type="OrthoDB" id="7442607at2759"/>
<dbReference type="PhylomeDB" id="P20293"/>
<dbReference type="TreeFam" id="TF106341"/>
<dbReference type="BioGRID-ORCS" id="20997">
    <property type="hits" value="0 hits in 2 CRISPR screens"/>
</dbReference>
<dbReference type="PRO" id="PR:P20293"/>
<dbReference type="Proteomes" id="UP000000589">
    <property type="component" value="Chromosome 17"/>
</dbReference>
<dbReference type="RNAct" id="P20293">
    <property type="molecule type" value="protein"/>
</dbReference>
<dbReference type="Bgee" id="ENSMUSG00000062327">
    <property type="expression patterns" value="Expressed in embryonic post-anal tail and 56 other cell types or tissues"/>
</dbReference>
<dbReference type="ExpressionAtlas" id="P20293">
    <property type="expression patterns" value="baseline and differential"/>
</dbReference>
<dbReference type="GO" id="GO:0000785">
    <property type="term" value="C:chromatin"/>
    <property type="evidence" value="ECO:0000314"/>
    <property type="project" value="BHF-UCL"/>
</dbReference>
<dbReference type="GO" id="GO:0005737">
    <property type="term" value="C:cytoplasm"/>
    <property type="evidence" value="ECO:0000314"/>
    <property type="project" value="MGI"/>
</dbReference>
<dbReference type="GO" id="GO:0005654">
    <property type="term" value="C:nucleoplasm"/>
    <property type="evidence" value="ECO:0000304"/>
    <property type="project" value="Reactome"/>
</dbReference>
<dbReference type="GO" id="GO:0005634">
    <property type="term" value="C:nucleus"/>
    <property type="evidence" value="ECO:0000314"/>
    <property type="project" value="MGI"/>
</dbReference>
<dbReference type="GO" id="GO:0000981">
    <property type="term" value="F:DNA-binding transcription factor activity, RNA polymerase II-specific"/>
    <property type="evidence" value="ECO:0000314"/>
    <property type="project" value="MGI"/>
</dbReference>
<dbReference type="GO" id="GO:0000978">
    <property type="term" value="F:RNA polymerase II cis-regulatory region sequence-specific DNA binding"/>
    <property type="evidence" value="ECO:0000314"/>
    <property type="project" value="BHF-UCL"/>
</dbReference>
<dbReference type="GO" id="GO:0061629">
    <property type="term" value="F:RNA polymerase II-specific DNA-binding transcription factor binding"/>
    <property type="evidence" value="ECO:0000353"/>
    <property type="project" value="BHF-UCL"/>
</dbReference>
<dbReference type="GO" id="GO:0043565">
    <property type="term" value="F:sequence-specific DNA binding"/>
    <property type="evidence" value="ECO:0000314"/>
    <property type="project" value="MGI"/>
</dbReference>
<dbReference type="GO" id="GO:0003714">
    <property type="term" value="F:transcription corepressor activity"/>
    <property type="evidence" value="ECO:0000314"/>
    <property type="project" value="BHF-UCL"/>
</dbReference>
<dbReference type="GO" id="GO:0009653">
    <property type="term" value="P:anatomical structure morphogenesis"/>
    <property type="evidence" value="ECO:0000315"/>
    <property type="project" value="MGI"/>
</dbReference>
<dbReference type="GO" id="GO:0009952">
    <property type="term" value="P:anterior/posterior pattern specification"/>
    <property type="evidence" value="ECO:0000315"/>
    <property type="project" value="MGI"/>
</dbReference>
<dbReference type="GO" id="GO:0060349">
    <property type="term" value="P:bone morphogenesis"/>
    <property type="evidence" value="ECO:0000316"/>
    <property type="project" value="MGI"/>
</dbReference>
<dbReference type="GO" id="GO:0055007">
    <property type="term" value="P:cardiac muscle cell differentiation"/>
    <property type="evidence" value="ECO:0000303"/>
    <property type="project" value="UniProtKB"/>
</dbReference>
<dbReference type="GO" id="GO:0060379">
    <property type="term" value="P:cardiac muscle cell myoblast differentiation"/>
    <property type="evidence" value="ECO:0000315"/>
    <property type="project" value="BHF-UCL"/>
</dbReference>
<dbReference type="GO" id="GO:0008283">
    <property type="term" value="P:cell population proliferation"/>
    <property type="evidence" value="ECO:0000315"/>
    <property type="project" value="MGI"/>
</dbReference>
<dbReference type="GO" id="GO:0071300">
    <property type="term" value="P:cellular response to retinoic acid"/>
    <property type="evidence" value="ECO:0007669"/>
    <property type="project" value="Ensembl"/>
</dbReference>
<dbReference type="GO" id="GO:0061371">
    <property type="term" value="P:determination of heart left/right asymmetry"/>
    <property type="evidence" value="ECO:0000315"/>
    <property type="project" value="MGI"/>
</dbReference>
<dbReference type="GO" id="GO:0048706">
    <property type="term" value="P:embryonic skeletal system development"/>
    <property type="evidence" value="ECO:0000315"/>
    <property type="project" value="MGI"/>
</dbReference>
<dbReference type="GO" id="GO:0007498">
    <property type="term" value="P:mesoderm development"/>
    <property type="evidence" value="ECO:0000315"/>
    <property type="project" value="MGI"/>
</dbReference>
<dbReference type="GO" id="GO:0007509">
    <property type="term" value="P:mesoderm migration involved in gastrulation"/>
    <property type="evidence" value="ECO:0000315"/>
    <property type="project" value="MGI"/>
</dbReference>
<dbReference type="GO" id="GO:0000122">
    <property type="term" value="P:negative regulation of transcription by RNA polymerase II"/>
    <property type="evidence" value="ECO:0000314"/>
    <property type="project" value="BHF-UCL"/>
</dbReference>
<dbReference type="GO" id="GO:0001839">
    <property type="term" value="P:neural plate morphogenesis"/>
    <property type="evidence" value="ECO:0000315"/>
    <property type="project" value="MGI"/>
</dbReference>
<dbReference type="GO" id="GO:0001843">
    <property type="term" value="P:neural tube closure"/>
    <property type="evidence" value="ECO:0000315"/>
    <property type="project" value="MGI"/>
</dbReference>
<dbReference type="GO" id="GO:0030903">
    <property type="term" value="P:notochord development"/>
    <property type="evidence" value="ECO:0000315"/>
    <property type="project" value="MGI"/>
</dbReference>
<dbReference type="GO" id="GO:0014028">
    <property type="term" value="P:notochord formation"/>
    <property type="evidence" value="ECO:0000315"/>
    <property type="project" value="MGI"/>
</dbReference>
<dbReference type="GO" id="GO:0007341">
    <property type="term" value="P:penetration of zona pellucida"/>
    <property type="evidence" value="ECO:0000315"/>
    <property type="project" value="MGI"/>
</dbReference>
<dbReference type="GO" id="GO:0008284">
    <property type="term" value="P:positive regulation of cell population proliferation"/>
    <property type="evidence" value="ECO:0000315"/>
    <property type="project" value="MGI"/>
</dbReference>
<dbReference type="GO" id="GO:0045944">
    <property type="term" value="P:positive regulation of transcription by RNA polymerase II"/>
    <property type="evidence" value="ECO:0000315"/>
    <property type="project" value="BHF-UCL"/>
</dbReference>
<dbReference type="GO" id="GO:0036342">
    <property type="term" value="P:post-anal tail morphogenesis"/>
    <property type="evidence" value="ECO:0000315"/>
    <property type="project" value="MGI"/>
</dbReference>
<dbReference type="GO" id="GO:0006357">
    <property type="term" value="P:regulation of transcription by RNA polymerase II"/>
    <property type="evidence" value="ECO:0000314"/>
    <property type="project" value="MGI"/>
</dbReference>
<dbReference type="GO" id="GO:0023019">
    <property type="term" value="P:signal transduction involved in regulation of gene expression"/>
    <property type="evidence" value="ECO:0000314"/>
    <property type="project" value="MGI"/>
</dbReference>
<dbReference type="GO" id="GO:0001756">
    <property type="term" value="P:somitogenesis"/>
    <property type="evidence" value="ECO:0000315"/>
    <property type="project" value="MGI"/>
</dbReference>
<dbReference type="GO" id="GO:0006366">
    <property type="term" value="P:transcription by RNA polymerase II"/>
    <property type="evidence" value="ECO:0000316"/>
    <property type="project" value="MGI"/>
</dbReference>
<dbReference type="GO" id="GO:0001570">
    <property type="term" value="P:vasculogenesis"/>
    <property type="evidence" value="ECO:0000315"/>
    <property type="project" value="MGI"/>
</dbReference>
<dbReference type="CDD" id="cd20202">
    <property type="entry name" value="T-box_TBXT"/>
    <property type="match status" value="1"/>
</dbReference>
<dbReference type="FunFam" id="2.60.40.820:FF:000002">
    <property type="entry name" value="T-box transcription factor Brachyury"/>
    <property type="match status" value="1"/>
</dbReference>
<dbReference type="Gene3D" id="2.60.40.820">
    <property type="entry name" value="Transcription factor, T-box"/>
    <property type="match status" value="1"/>
</dbReference>
<dbReference type="InterPro" id="IPR008967">
    <property type="entry name" value="p53-like_TF_DNA-bd_sf"/>
</dbReference>
<dbReference type="InterPro" id="IPR046360">
    <property type="entry name" value="T-box_DNA-bd"/>
</dbReference>
<dbReference type="InterPro" id="IPR036960">
    <property type="entry name" value="T-box_sf"/>
</dbReference>
<dbReference type="InterPro" id="IPR002070">
    <property type="entry name" value="TF_Brachyury"/>
</dbReference>
<dbReference type="InterPro" id="IPR001699">
    <property type="entry name" value="TF_T-box"/>
</dbReference>
<dbReference type="InterPro" id="IPR018186">
    <property type="entry name" value="TF_T-box_CS"/>
</dbReference>
<dbReference type="PANTHER" id="PTHR11267">
    <property type="entry name" value="T-BOX PROTEIN-RELATED"/>
    <property type="match status" value="1"/>
</dbReference>
<dbReference type="PANTHER" id="PTHR11267:SF83">
    <property type="entry name" value="T-BOX TRANSCRIPTION FACTOR T"/>
    <property type="match status" value="1"/>
</dbReference>
<dbReference type="Pfam" id="PF00907">
    <property type="entry name" value="T-box"/>
    <property type="match status" value="1"/>
</dbReference>
<dbReference type="PRINTS" id="PR00938">
    <property type="entry name" value="BRACHYURY"/>
</dbReference>
<dbReference type="PRINTS" id="PR00937">
    <property type="entry name" value="TBOX"/>
</dbReference>
<dbReference type="SMART" id="SM00425">
    <property type="entry name" value="TBOX"/>
    <property type="match status" value="1"/>
</dbReference>
<dbReference type="SUPFAM" id="SSF49417">
    <property type="entry name" value="p53-like transcription factors"/>
    <property type="match status" value="1"/>
</dbReference>
<dbReference type="PROSITE" id="PS01283">
    <property type="entry name" value="TBOX_1"/>
    <property type="match status" value="1"/>
</dbReference>
<dbReference type="PROSITE" id="PS01264">
    <property type="entry name" value="TBOX_2"/>
    <property type="match status" value="1"/>
</dbReference>
<dbReference type="PROSITE" id="PS50252">
    <property type="entry name" value="TBOX_3"/>
    <property type="match status" value="1"/>
</dbReference>
<name>TBXT_MOUSE</name>
<sequence length="436" mass="47440">MSSPGTESAGKSLQYRVDHLLSAVESELQAGSEKGDPTERELRVGLEESELWLRFKELTNEMIVTKNGRRMFPVLKVNVSGLDPNAMYSFLLDFVTADNHRWKYVNGEWVPGGKPEPQAPSCVYIHPDSPNFGAHWMKAPVSFSKVKLTNKLNGGGQIMLNSLHKYEPRIHIVRVGGPQRMITSHCFPETQFIAVTAYQNEEITALKIKYNPFAKAFLDAKERNDHKDVMEEPGDCQQPGYSQWGWLVPGAGTLCPPASSHPQFGGSLSLPSTHGCERYPALRNHRSSPYPSPYAHRNSSPTYADNSSACLSMLQSHDNWSSLGVPGHTSMLPVSHNASPPTGSSQYPSLWSVSNGTITPGSQTAGVSNGLGAQFFRGSPAHYTPLTHTVSAATSSSSGSPMYEGAATVTDISDSQYDTAQSLLIASWTPVSPPSM</sequence>
<accession>P20293</accession>
<proteinExistence type="evidence at protein level"/>
<evidence type="ECO:0000250" key="1">
    <source>
        <dbReference type="UniProtKB" id="O15178"/>
    </source>
</evidence>
<evidence type="ECO:0000255" key="2">
    <source>
        <dbReference type="PROSITE-ProRule" id="PRU00201"/>
    </source>
</evidence>
<evidence type="ECO:0000269" key="3">
    <source>
    </source>
</evidence>
<evidence type="ECO:0000269" key="4">
    <source>
    </source>
</evidence>
<evidence type="ECO:0000303" key="5">
    <source>
    </source>
</evidence>
<evidence type="ECO:0000305" key="6"/>